<comment type="function">
    <text evidence="2">Purine salvage pathway enzyme that catalyzes the transfer of the ribosyl-5-phosphate group from 5-phospho-alpha-D-ribose 1-diphosphate (PRPP) to the N9 position of the 6-oxopurines hypoxanthine and guanine to form the corresponding ribonucleotides IMP (inosine 5'-monophosphate) and GMP (guanosine 5'-monophosphate), with the release of PPi.</text>
</comment>
<comment type="catalytic activity">
    <reaction evidence="2">
        <text>IMP + diphosphate = hypoxanthine + 5-phospho-alpha-D-ribose 1-diphosphate</text>
        <dbReference type="Rhea" id="RHEA:17973"/>
        <dbReference type="ChEBI" id="CHEBI:17368"/>
        <dbReference type="ChEBI" id="CHEBI:33019"/>
        <dbReference type="ChEBI" id="CHEBI:58017"/>
        <dbReference type="ChEBI" id="CHEBI:58053"/>
        <dbReference type="EC" id="2.4.2.8"/>
    </reaction>
    <physiologicalReaction direction="right-to-left" evidence="2">
        <dbReference type="Rhea" id="RHEA:17975"/>
    </physiologicalReaction>
</comment>
<comment type="catalytic activity">
    <reaction evidence="2">
        <text>GMP + diphosphate = guanine + 5-phospho-alpha-D-ribose 1-diphosphate</text>
        <dbReference type="Rhea" id="RHEA:25424"/>
        <dbReference type="ChEBI" id="CHEBI:16235"/>
        <dbReference type="ChEBI" id="CHEBI:33019"/>
        <dbReference type="ChEBI" id="CHEBI:58017"/>
        <dbReference type="ChEBI" id="CHEBI:58115"/>
        <dbReference type="EC" id="2.4.2.8"/>
    </reaction>
    <physiologicalReaction direction="right-to-left" evidence="2">
        <dbReference type="Rhea" id="RHEA:25426"/>
    </physiologicalReaction>
</comment>
<comment type="cofactor">
    <cofactor evidence="2">
        <name>Mg(2+)</name>
        <dbReference type="ChEBI" id="CHEBI:18420"/>
    </cofactor>
</comment>
<comment type="pathway">
    <text evidence="2">Purine metabolism; IMP biosynthesis via salvage pathway; IMP from hypoxanthine: step 1/1.</text>
</comment>
<comment type="pathway">
    <text evidence="2">Purine metabolism; GMP biosynthesis via salvage pathway; GMP from guanine: step 1/1.</text>
</comment>
<comment type="subcellular location">
    <subcellularLocation>
        <location>Cytoplasm</location>
    </subcellularLocation>
</comment>
<comment type="similarity">
    <text evidence="3">Belongs to the purine/pyrimidine phosphoribosyltransferase family.</text>
</comment>
<accession>P37472</accession>
<sequence length="180" mass="20239">MMKHDIEKVLISEEEIQKKVKELGAELTSEYQDTFPLAIGVLKGALPFMADLIKHIDTYLEMDFMDVSSYGNSTVSSGEVKIIKDLDTSVEGRDILIIEDIIDSGLTLSYLVELFRYRKAKSIKIVTLLDKPSGRKADIKADFVGFEVPDAFVVGYGLDYAERYRNLPYIGVLKPAVYES</sequence>
<name>HGPRT_BACSU</name>
<keyword id="KW-0963">Cytoplasm</keyword>
<keyword id="KW-0328">Glycosyltransferase</keyword>
<keyword id="KW-0460">Magnesium</keyword>
<keyword id="KW-0479">Metal-binding</keyword>
<keyword id="KW-0547">Nucleotide-binding</keyword>
<keyword id="KW-0660">Purine salvage</keyword>
<keyword id="KW-1185">Reference proteome</keyword>
<keyword id="KW-0808">Transferase</keyword>
<dbReference type="EC" id="2.4.2.8" evidence="2"/>
<dbReference type="EMBL" id="D26185">
    <property type="protein sequence ID" value="BAA05303.1"/>
    <property type="molecule type" value="Genomic_DNA"/>
</dbReference>
<dbReference type="EMBL" id="AL009126">
    <property type="protein sequence ID" value="CAB11844.1"/>
    <property type="molecule type" value="Genomic_DNA"/>
</dbReference>
<dbReference type="PIR" id="S66098">
    <property type="entry name" value="S66098"/>
</dbReference>
<dbReference type="RefSeq" id="NP_387949.1">
    <property type="nucleotide sequence ID" value="NC_000964.3"/>
</dbReference>
<dbReference type="RefSeq" id="WP_003226700.1">
    <property type="nucleotide sequence ID" value="NZ_OZ025638.1"/>
</dbReference>
<dbReference type="SMR" id="P37472"/>
<dbReference type="FunCoup" id="P37472">
    <property type="interactions" value="424"/>
</dbReference>
<dbReference type="STRING" id="224308.BSU00680"/>
<dbReference type="jPOST" id="P37472"/>
<dbReference type="PaxDb" id="224308-BSU00680"/>
<dbReference type="EnsemblBacteria" id="CAB11844">
    <property type="protein sequence ID" value="CAB11844"/>
    <property type="gene ID" value="BSU_00680"/>
</dbReference>
<dbReference type="GeneID" id="936945"/>
<dbReference type="KEGG" id="bsu:BSU00680"/>
<dbReference type="PATRIC" id="fig|224308.43.peg.69"/>
<dbReference type="eggNOG" id="COG0634">
    <property type="taxonomic scope" value="Bacteria"/>
</dbReference>
<dbReference type="InParanoid" id="P37472"/>
<dbReference type="OrthoDB" id="9802824at2"/>
<dbReference type="PhylomeDB" id="P37472"/>
<dbReference type="BioCyc" id="BSUB:BSU00680-MONOMER"/>
<dbReference type="UniPathway" id="UPA00591">
    <property type="reaction ID" value="UER00648"/>
</dbReference>
<dbReference type="UniPathway" id="UPA00909">
    <property type="reaction ID" value="UER00887"/>
</dbReference>
<dbReference type="Proteomes" id="UP000001570">
    <property type="component" value="Chromosome"/>
</dbReference>
<dbReference type="GO" id="GO:0005829">
    <property type="term" value="C:cytosol"/>
    <property type="evidence" value="ECO:0000318"/>
    <property type="project" value="GO_Central"/>
</dbReference>
<dbReference type="GO" id="GO:0052657">
    <property type="term" value="F:guanine phosphoribosyltransferase activity"/>
    <property type="evidence" value="ECO:0007669"/>
    <property type="project" value="RHEA"/>
</dbReference>
<dbReference type="GO" id="GO:0004422">
    <property type="term" value="F:hypoxanthine phosphoribosyltransferase activity"/>
    <property type="evidence" value="ECO:0000318"/>
    <property type="project" value="GO_Central"/>
</dbReference>
<dbReference type="GO" id="GO:0000287">
    <property type="term" value="F:magnesium ion binding"/>
    <property type="evidence" value="ECO:0000318"/>
    <property type="project" value="GO_Central"/>
</dbReference>
<dbReference type="GO" id="GO:0000166">
    <property type="term" value="F:nucleotide binding"/>
    <property type="evidence" value="ECO:0007669"/>
    <property type="project" value="UniProtKB-KW"/>
</dbReference>
<dbReference type="GO" id="GO:0032263">
    <property type="term" value="P:GMP salvage"/>
    <property type="evidence" value="ECO:0000318"/>
    <property type="project" value="GO_Central"/>
</dbReference>
<dbReference type="GO" id="GO:0006178">
    <property type="term" value="P:guanine salvage"/>
    <property type="evidence" value="ECO:0000318"/>
    <property type="project" value="GO_Central"/>
</dbReference>
<dbReference type="GO" id="GO:0046100">
    <property type="term" value="P:hypoxanthine metabolic process"/>
    <property type="evidence" value="ECO:0000318"/>
    <property type="project" value="GO_Central"/>
</dbReference>
<dbReference type="GO" id="GO:0032264">
    <property type="term" value="P:IMP salvage"/>
    <property type="evidence" value="ECO:0000318"/>
    <property type="project" value="GO_Central"/>
</dbReference>
<dbReference type="GO" id="GO:0006166">
    <property type="term" value="P:purine ribonucleoside salvage"/>
    <property type="evidence" value="ECO:0007669"/>
    <property type="project" value="UniProtKB-KW"/>
</dbReference>
<dbReference type="CDD" id="cd06223">
    <property type="entry name" value="PRTases_typeI"/>
    <property type="match status" value="1"/>
</dbReference>
<dbReference type="FunFam" id="3.40.50.2020:FF:000006">
    <property type="entry name" value="Hypoxanthine phosphoribosyltransferase"/>
    <property type="match status" value="1"/>
</dbReference>
<dbReference type="Gene3D" id="3.40.50.2020">
    <property type="match status" value="1"/>
</dbReference>
<dbReference type="InterPro" id="IPR050408">
    <property type="entry name" value="HGPRT"/>
</dbReference>
<dbReference type="InterPro" id="IPR005904">
    <property type="entry name" value="Hxn_phspho_trans"/>
</dbReference>
<dbReference type="InterPro" id="IPR000836">
    <property type="entry name" value="PRibTrfase_dom"/>
</dbReference>
<dbReference type="InterPro" id="IPR029057">
    <property type="entry name" value="PRTase-like"/>
</dbReference>
<dbReference type="NCBIfam" id="TIGR01203">
    <property type="entry name" value="HGPRTase"/>
    <property type="match status" value="1"/>
</dbReference>
<dbReference type="PANTHER" id="PTHR43340:SF1">
    <property type="entry name" value="HYPOXANTHINE PHOSPHORIBOSYLTRANSFERASE"/>
    <property type="match status" value="1"/>
</dbReference>
<dbReference type="PANTHER" id="PTHR43340">
    <property type="entry name" value="HYPOXANTHINE-GUANINE PHOSPHORIBOSYLTRANSFERASE"/>
    <property type="match status" value="1"/>
</dbReference>
<dbReference type="Pfam" id="PF00156">
    <property type="entry name" value="Pribosyltran"/>
    <property type="match status" value="1"/>
</dbReference>
<dbReference type="SUPFAM" id="SSF53271">
    <property type="entry name" value="PRTase-like"/>
    <property type="match status" value="1"/>
</dbReference>
<dbReference type="PROSITE" id="PS00103">
    <property type="entry name" value="PUR_PYR_PR_TRANSFER"/>
    <property type="match status" value="1"/>
</dbReference>
<protein>
    <recommendedName>
        <fullName>Hypoxanthine-guanine phosphoribosyltransferase</fullName>
        <shortName>HGPRT</shortName>
        <shortName>HGPRTase</shortName>
        <ecNumber evidence="2">2.4.2.8</ecNumber>
    </recommendedName>
</protein>
<evidence type="ECO:0000250" key="1">
    <source>
        <dbReference type="UniProtKB" id="P0A9M2"/>
    </source>
</evidence>
<evidence type="ECO:0000250" key="2">
    <source>
        <dbReference type="UniProtKB" id="P9WHQ9"/>
    </source>
</evidence>
<evidence type="ECO:0000305" key="3"/>
<proteinExistence type="inferred from homology"/>
<feature type="chain" id="PRO_0000139602" description="Hypoxanthine-guanine phosphoribosyltransferase">
    <location>
        <begin position="1"/>
        <end position="180"/>
    </location>
</feature>
<feature type="active site" description="Proton acceptor" evidence="1">
    <location>
        <position position="103"/>
    </location>
</feature>
<feature type="binding site" evidence="2">
    <location>
        <position position="43"/>
    </location>
    <ligand>
        <name>diphosphate</name>
        <dbReference type="ChEBI" id="CHEBI:33019"/>
    </ligand>
</feature>
<feature type="binding site" evidence="2">
    <location>
        <position position="44"/>
    </location>
    <ligand>
        <name>diphosphate</name>
        <dbReference type="ChEBI" id="CHEBI:33019"/>
    </ligand>
</feature>
<feature type="binding site" evidence="2">
    <location>
        <position position="99"/>
    </location>
    <ligand>
        <name>Mg(2+)</name>
        <dbReference type="ChEBI" id="CHEBI:18420"/>
    </ligand>
</feature>
<feature type="binding site" evidence="2">
    <location>
        <position position="100"/>
    </location>
    <ligand>
        <name>Mg(2+)</name>
        <dbReference type="ChEBI" id="CHEBI:18420"/>
    </ligand>
</feature>
<feature type="binding site" evidence="2">
    <location>
        <position position="131"/>
    </location>
    <ligand>
        <name>GMP</name>
        <dbReference type="ChEBI" id="CHEBI:58115"/>
    </ligand>
</feature>
<feature type="binding site" evidence="2">
    <location>
        <begin position="152"/>
        <end position="153"/>
    </location>
    <ligand>
        <name>GMP</name>
        <dbReference type="ChEBI" id="CHEBI:58115"/>
    </ligand>
</feature>
<feature type="binding site" evidence="2">
    <location>
        <position position="159"/>
    </location>
    <ligand>
        <name>GMP</name>
        <dbReference type="ChEBI" id="CHEBI:58115"/>
    </ligand>
</feature>
<feature type="binding site" evidence="2">
    <location>
        <position position="165"/>
    </location>
    <ligand>
        <name>diphosphate</name>
        <dbReference type="ChEBI" id="CHEBI:33019"/>
    </ligand>
</feature>
<reference key="1">
    <citation type="journal article" date="1994" name="DNA Res.">
        <title>Systematic sequencing of the 180 kilobase region of the Bacillus subtilis chromosome containing the replication origin.</title>
        <authorList>
            <person name="Ogasawara N."/>
            <person name="Nakai S."/>
            <person name="Yoshikawa H."/>
        </authorList>
    </citation>
    <scope>NUCLEOTIDE SEQUENCE [GENOMIC DNA]</scope>
    <source>
        <strain>168</strain>
    </source>
</reference>
<reference key="2">
    <citation type="journal article" date="1997" name="Nature">
        <title>The complete genome sequence of the Gram-positive bacterium Bacillus subtilis.</title>
        <authorList>
            <person name="Kunst F."/>
            <person name="Ogasawara N."/>
            <person name="Moszer I."/>
            <person name="Albertini A.M."/>
            <person name="Alloni G."/>
            <person name="Azevedo V."/>
            <person name="Bertero M.G."/>
            <person name="Bessieres P."/>
            <person name="Bolotin A."/>
            <person name="Borchert S."/>
            <person name="Borriss R."/>
            <person name="Boursier L."/>
            <person name="Brans A."/>
            <person name="Braun M."/>
            <person name="Brignell S.C."/>
            <person name="Bron S."/>
            <person name="Brouillet S."/>
            <person name="Bruschi C.V."/>
            <person name="Caldwell B."/>
            <person name="Capuano V."/>
            <person name="Carter N.M."/>
            <person name="Choi S.-K."/>
            <person name="Codani J.-J."/>
            <person name="Connerton I.F."/>
            <person name="Cummings N.J."/>
            <person name="Daniel R.A."/>
            <person name="Denizot F."/>
            <person name="Devine K.M."/>
            <person name="Duesterhoeft A."/>
            <person name="Ehrlich S.D."/>
            <person name="Emmerson P.T."/>
            <person name="Entian K.-D."/>
            <person name="Errington J."/>
            <person name="Fabret C."/>
            <person name="Ferrari E."/>
            <person name="Foulger D."/>
            <person name="Fritz C."/>
            <person name="Fujita M."/>
            <person name="Fujita Y."/>
            <person name="Fuma S."/>
            <person name="Galizzi A."/>
            <person name="Galleron N."/>
            <person name="Ghim S.-Y."/>
            <person name="Glaser P."/>
            <person name="Goffeau A."/>
            <person name="Golightly E.J."/>
            <person name="Grandi G."/>
            <person name="Guiseppi G."/>
            <person name="Guy B.J."/>
            <person name="Haga K."/>
            <person name="Haiech J."/>
            <person name="Harwood C.R."/>
            <person name="Henaut A."/>
            <person name="Hilbert H."/>
            <person name="Holsappel S."/>
            <person name="Hosono S."/>
            <person name="Hullo M.-F."/>
            <person name="Itaya M."/>
            <person name="Jones L.-M."/>
            <person name="Joris B."/>
            <person name="Karamata D."/>
            <person name="Kasahara Y."/>
            <person name="Klaerr-Blanchard M."/>
            <person name="Klein C."/>
            <person name="Kobayashi Y."/>
            <person name="Koetter P."/>
            <person name="Koningstein G."/>
            <person name="Krogh S."/>
            <person name="Kumano M."/>
            <person name="Kurita K."/>
            <person name="Lapidus A."/>
            <person name="Lardinois S."/>
            <person name="Lauber J."/>
            <person name="Lazarevic V."/>
            <person name="Lee S.-M."/>
            <person name="Levine A."/>
            <person name="Liu H."/>
            <person name="Masuda S."/>
            <person name="Mauel C."/>
            <person name="Medigue C."/>
            <person name="Medina N."/>
            <person name="Mellado R.P."/>
            <person name="Mizuno M."/>
            <person name="Moestl D."/>
            <person name="Nakai S."/>
            <person name="Noback M."/>
            <person name="Noone D."/>
            <person name="O'Reilly M."/>
            <person name="Ogawa K."/>
            <person name="Ogiwara A."/>
            <person name="Oudega B."/>
            <person name="Park S.-H."/>
            <person name="Parro V."/>
            <person name="Pohl T.M."/>
            <person name="Portetelle D."/>
            <person name="Porwollik S."/>
            <person name="Prescott A.M."/>
            <person name="Presecan E."/>
            <person name="Pujic P."/>
            <person name="Purnelle B."/>
            <person name="Rapoport G."/>
            <person name="Rey M."/>
            <person name="Reynolds S."/>
            <person name="Rieger M."/>
            <person name="Rivolta C."/>
            <person name="Rocha E."/>
            <person name="Roche B."/>
            <person name="Rose M."/>
            <person name="Sadaie Y."/>
            <person name="Sato T."/>
            <person name="Scanlan E."/>
            <person name="Schleich S."/>
            <person name="Schroeter R."/>
            <person name="Scoffone F."/>
            <person name="Sekiguchi J."/>
            <person name="Sekowska A."/>
            <person name="Seror S.J."/>
            <person name="Serror P."/>
            <person name="Shin B.-S."/>
            <person name="Soldo B."/>
            <person name="Sorokin A."/>
            <person name="Tacconi E."/>
            <person name="Takagi T."/>
            <person name="Takahashi H."/>
            <person name="Takemaru K."/>
            <person name="Takeuchi M."/>
            <person name="Tamakoshi A."/>
            <person name="Tanaka T."/>
            <person name="Terpstra P."/>
            <person name="Tognoni A."/>
            <person name="Tosato V."/>
            <person name="Uchiyama S."/>
            <person name="Vandenbol M."/>
            <person name="Vannier F."/>
            <person name="Vassarotti A."/>
            <person name="Viari A."/>
            <person name="Wambutt R."/>
            <person name="Wedler E."/>
            <person name="Wedler H."/>
            <person name="Weitzenegger T."/>
            <person name="Winters P."/>
            <person name="Wipat A."/>
            <person name="Yamamoto H."/>
            <person name="Yamane K."/>
            <person name="Yasumoto K."/>
            <person name="Yata K."/>
            <person name="Yoshida K."/>
            <person name="Yoshikawa H.-F."/>
            <person name="Zumstein E."/>
            <person name="Yoshikawa H."/>
            <person name="Danchin A."/>
        </authorList>
    </citation>
    <scope>NUCLEOTIDE SEQUENCE [LARGE SCALE GENOMIC DNA]</scope>
    <source>
        <strain>168</strain>
    </source>
</reference>
<organism>
    <name type="scientific">Bacillus subtilis (strain 168)</name>
    <dbReference type="NCBI Taxonomy" id="224308"/>
    <lineage>
        <taxon>Bacteria</taxon>
        <taxon>Bacillati</taxon>
        <taxon>Bacillota</taxon>
        <taxon>Bacilli</taxon>
        <taxon>Bacillales</taxon>
        <taxon>Bacillaceae</taxon>
        <taxon>Bacillus</taxon>
    </lineage>
</organism>
<gene>
    <name type="primary">hprT</name>
    <name type="synonym">hpt</name>
    <name type="ordered locus">BSU00680</name>
</gene>